<protein>
    <recommendedName>
        <fullName evidence="1">ATP synthase subunit beta, chloroplastic</fullName>
        <ecNumber evidence="1">7.1.2.2</ecNumber>
    </recommendedName>
    <alternativeName>
        <fullName evidence="1">ATP synthase F1 sector subunit beta</fullName>
    </alternativeName>
    <alternativeName>
        <fullName evidence="1">F-ATPase subunit beta</fullName>
    </alternativeName>
</protein>
<name>ATPB_BEARE</name>
<proteinExistence type="inferred from homology"/>
<dbReference type="EC" id="7.1.2.2" evidence="1"/>
<dbReference type="EMBL" id="AF168888">
    <property type="protein sequence ID" value="AAD50830.1"/>
    <property type="molecule type" value="Genomic_DNA"/>
</dbReference>
<dbReference type="SMR" id="Q9TMV0"/>
<dbReference type="GO" id="GO:0009535">
    <property type="term" value="C:chloroplast thylakoid membrane"/>
    <property type="evidence" value="ECO:0007669"/>
    <property type="project" value="UniProtKB-SubCell"/>
</dbReference>
<dbReference type="GO" id="GO:0005739">
    <property type="term" value="C:mitochondrion"/>
    <property type="evidence" value="ECO:0007669"/>
    <property type="project" value="GOC"/>
</dbReference>
<dbReference type="GO" id="GO:0045259">
    <property type="term" value="C:proton-transporting ATP synthase complex"/>
    <property type="evidence" value="ECO:0007669"/>
    <property type="project" value="UniProtKB-KW"/>
</dbReference>
<dbReference type="GO" id="GO:0005524">
    <property type="term" value="F:ATP binding"/>
    <property type="evidence" value="ECO:0007669"/>
    <property type="project" value="UniProtKB-UniRule"/>
</dbReference>
<dbReference type="GO" id="GO:0016887">
    <property type="term" value="F:ATP hydrolysis activity"/>
    <property type="evidence" value="ECO:0007669"/>
    <property type="project" value="InterPro"/>
</dbReference>
<dbReference type="GO" id="GO:0046933">
    <property type="term" value="F:proton-transporting ATP synthase activity, rotational mechanism"/>
    <property type="evidence" value="ECO:0007669"/>
    <property type="project" value="UniProtKB-UniRule"/>
</dbReference>
<dbReference type="GO" id="GO:0042776">
    <property type="term" value="P:proton motive force-driven mitochondrial ATP synthesis"/>
    <property type="evidence" value="ECO:0007669"/>
    <property type="project" value="TreeGrafter"/>
</dbReference>
<dbReference type="CDD" id="cd18110">
    <property type="entry name" value="ATP-synt_F1_beta_C"/>
    <property type="match status" value="1"/>
</dbReference>
<dbReference type="CDD" id="cd18115">
    <property type="entry name" value="ATP-synt_F1_beta_N"/>
    <property type="match status" value="1"/>
</dbReference>
<dbReference type="CDD" id="cd01133">
    <property type="entry name" value="F1-ATPase_beta_CD"/>
    <property type="match status" value="1"/>
</dbReference>
<dbReference type="FunFam" id="1.10.1140.10:FF:000001">
    <property type="entry name" value="ATP synthase subunit beta"/>
    <property type="match status" value="1"/>
</dbReference>
<dbReference type="FunFam" id="3.40.50.12240:FF:000006">
    <property type="entry name" value="ATP synthase subunit beta"/>
    <property type="match status" value="1"/>
</dbReference>
<dbReference type="FunFam" id="3.40.50.300:FF:000004">
    <property type="entry name" value="ATP synthase subunit beta"/>
    <property type="match status" value="1"/>
</dbReference>
<dbReference type="FunFam" id="2.40.10.170:FF:000002">
    <property type="entry name" value="ATP synthase subunit beta, chloroplastic"/>
    <property type="match status" value="1"/>
</dbReference>
<dbReference type="Gene3D" id="2.40.10.170">
    <property type="match status" value="1"/>
</dbReference>
<dbReference type="Gene3D" id="1.10.1140.10">
    <property type="entry name" value="Bovine Mitochondrial F1-atpase, Atp Synthase Beta Chain, Chain D, domain 3"/>
    <property type="match status" value="1"/>
</dbReference>
<dbReference type="Gene3D" id="3.40.50.300">
    <property type="entry name" value="P-loop containing nucleotide triphosphate hydrolases"/>
    <property type="match status" value="1"/>
</dbReference>
<dbReference type="HAMAP" id="MF_01347">
    <property type="entry name" value="ATP_synth_beta_bact"/>
    <property type="match status" value="1"/>
</dbReference>
<dbReference type="InterPro" id="IPR003593">
    <property type="entry name" value="AAA+_ATPase"/>
</dbReference>
<dbReference type="InterPro" id="IPR055190">
    <property type="entry name" value="ATP-synt_VA_C"/>
</dbReference>
<dbReference type="InterPro" id="IPR005722">
    <property type="entry name" value="ATP_synth_F1_bsu"/>
</dbReference>
<dbReference type="InterPro" id="IPR020003">
    <property type="entry name" value="ATPase_a/bsu_AS"/>
</dbReference>
<dbReference type="InterPro" id="IPR050053">
    <property type="entry name" value="ATPase_alpha/beta_chains"/>
</dbReference>
<dbReference type="InterPro" id="IPR004100">
    <property type="entry name" value="ATPase_F1/V1/A1_a/bsu_N"/>
</dbReference>
<dbReference type="InterPro" id="IPR036121">
    <property type="entry name" value="ATPase_F1/V1/A1_a/bsu_N_sf"/>
</dbReference>
<dbReference type="InterPro" id="IPR000194">
    <property type="entry name" value="ATPase_F1/V1/A1_a/bsu_nucl-bd"/>
</dbReference>
<dbReference type="InterPro" id="IPR024034">
    <property type="entry name" value="ATPase_F1/V1_b/a_C"/>
</dbReference>
<dbReference type="InterPro" id="IPR027417">
    <property type="entry name" value="P-loop_NTPase"/>
</dbReference>
<dbReference type="NCBIfam" id="TIGR01039">
    <property type="entry name" value="atpD"/>
    <property type="match status" value="1"/>
</dbReference>
<dbReference type="PANTHER" id="PTHR15184">
    <property type="entry name" value="ATP SYNTHASE"/>
    <property type="match status" value="1"/>
</dbReference>
<dbReference type="PANTHER" id="PTHR15184:SF71">
    <property type="entry name" value="ATP SYNTHASE SUBUNIT BETA, MITOCHONDRIAL"/>
    <property type="match status" value="1"/>
</dbReference>
<dbReference type="Pfam" id="PF00006">
    <property type="entry name" value="ATP-synt_ab"/>
    <property type="match status" value="1"/>
</dbReference>
<dbReference type="Pfam" id="PF02874">
    <property type="entry name" value="ATP-synt_ab_N"/>
    <property type="match status" value="1"/>
</dbReference>
<dbReference type="Pfam" id="PF22919">
    <property type="entry name" value="ATP-synt_VA_C"/>
    <property type="match status" value="1"/>
</dbReference>
<dbReference type="SMART" id="SM00382">
    <property type="entry name" value="AAA"/>
    <property type="match status" value="1"/>
</dbReference>
<dbReference type="SUPFAM" id="SSF47917">
    <property type="entry name" value="C-terminal domain of alpha and beta subunits of F1 ATP synthase"/>
    <property type="match status" value="1"/>
</dbReference>
<dbReference type="SUPFAM" id="SSF50615">
    <property type="entry name" value="N-terminal domain of alpha and beta subunits of F1 ATP synthase"/>
    <property type="match status" value="1"/>
</dbReference>
<dbReference type="SUPFAM" id="SSF52540">
    <property type="entry name" value="P-loop containing nucleoside triphosphate hydrolases"/>
    <property type="match status" value="1"/>
</dbReference>
<dbReference type="PROSITE" id="PS00152">
    <property type="entry name" value="ATPASE_ALPHA_BETA"/>
    <property type="match status" value="1"/>
</dbReference>
<sequence>MRINPTTSGPAVSTLDEKNLGHIAQIIGPVLDVVFPPGKMPNIYNALVVKGRDTVGQQINVTCEVQQLLGNNRVRAVAMSATDGLTRGMEVIDTGAPLSVPVGGATLGRIFNVLGEPVDNLGPVDTRTTSPIHRSAPAFIQLDTKLSIFETGIKVVDLLAPYRRGGKIGLFGGAGVGKTVLIMELINNIAKAHGGVSVFGGVGERTREGNDLYMEMKESGVINEKNIAESKVALVYGQMNEPPGARMRVGLTALTMAEYFRDVNEQDVLLFIDNIFRFVQAGSEVSALLGRMPSAVGYQPTLSTEMGSLQERITSTKEGSITSIQAVYVPADDLTDPAPATTFAHLDATTVLSRGLAAKGIYPAVDPLDSTSTMLQPGIVGEEHYETAQKVKQTSQRYKELQDIIAILGLDELSEEDRLTVARARKIERFLSQPFFVAEVFTGSPGKYVGLAETVRGFQLILSGELDSLPEQAFYLVGNIDEATAKAMNLEGENK</sequence>
<feature type="chain" id="PRO_0000144499" description="ATP synthase subunit beta, chloroplastic">
    <location>
        <begin position="1"/>
        <end position="495"/>
    </location>
</feature>
<feature type="binding site" evidence="1">
    <location>
        <begin position="172"/>
        <end position="179"/>
    </location>
    <ligand>
        <name>ATP</name>
        <dbReference type="ChEBI" id="CHEBI:30616"/>
    </ligand>
</feature>
<organism>
    <name type="scientific">Beaucarnea recurvata</name>
    <name type="common">Elephant-foot tree</name>
    <dbReference type="NCBI Taxonomy" id="39519"/>
    <lineage>
        <taxon>Eukaryota</taxon>
        <taxon>Viridiplantae</taxon>
        <taxon>Streptophyta</taxon>
        <taxon>Embryophyta</taxon>
        <taxon>Tracheophyta</taxon>
        <taxon>Spermatophyta</taxon>
        <taxon>Magnoliopsida</taxon>
        <taxon>Liliopsida</taxon>
        <taxon>Asparagales</taxon>
        <taxon>Asparagaceae</taxon>
        <taxon>Nolinoideae</taxon>
        <taxon>Beaucarnea</taxon>
    </lineage>
</organism>
<reference key="1">
    <citation type="submission" date="1999-07" db="EMBL/GenBank/DDBJ databases">
        <title>Molecular sequence phylogenetics of the Monocots.</title>
        <authorList>
            <person name="Hahn W.J."/>
        </authorList>
    </citation>
    <scope>NUCLEOTIDE SEQUENCE [GENOMIC DNA]</scope>
</reference>
<accession>Q9TMV0</accession>
<gene>
    <name evidence="1" type="primary">atpB</name>
</gene>
<keyword id="KW-0066">ATP synthesis</keyword>
<keyword id="KW-0067">ATP-binding</keyword>
<keyword id="KW-0139">CF(1)</keyword>
<keyword id="KW-0150">Chloroplast</keyword>
<keyword id="KW-0375">Hydrogen ion transport</keyword>
<keyword id="KW-0406">Ion transport</keyword>
<keyword id="KW-0472">Membrane</keyword>
<keyword id="KW-0547">Nucleotide-binding</keyword>
<keyword id="KW-0934">Plastid</keyword>
<keyword id="KW-0793">Thylakoid</keyword>
<keyword id="KW-1278">Translocase</keyword>
<keyword id="KW-0813">Transport</keyword>
<evidence type="ECO:0000255" key="1">
    <source>
        <dbReference type="HAMAP-Rule" id="MF_01347"/>
    </source>
</evidence>
<geneLocation type="chloroplast"/>
<comment type="function">
    <text evidence="1">Produces ATP from ADP in the presence of a proton gradient across the membrane. The catalytic sites are hosted primarily by the beta subunits.</text>
</comment>
<comment type="catalytic activity">
    <reaction evidence="1">
        <text>ATP + H2O + 4 H(+)(in) = ADP + phosphate + 5 H(+)(out)</text>
        <dbReference type="Rhea" id="RHEA:57720"/>
        <dbReference type="ChEBI" id="CHEBI:15377"/>
        <dbReference type="ChEBI" id="CHEBI:15378"/>
        <dbReference type="ChEBI" id="CHEBI:30616"/>
        <dbReference type="ChEBI" id="CHEBI:43474"/>
        <dbReference type="ChEBI" id="CHEBI:456216"/>
        <dbReference type="EC" id="7.1.2.2"/>
    </reaction>
</comment>
<comment type="subunit">
    <text evidence="1">F-type ATPases have 2 components, CF(1) - the catalytic core - and CF(0) - the membrane proton channel. CF(1) has five subunits: alpha(3), beta(3), gamma(1), delta(1), epsilon(1). CF(0) has four main subunits: a(1), b(1), b'(1) and c(9-12).</text>
</comment>
<comment type="subcellular location">
    <subcellularLocation>
        <location evidence="1">Plastid</location>
        <location evidence="1">Chloroplast thylakoid membrane</location>
        <topology evidence="1">Peripheral membrane protein</topology>
    </subcellularLocation>
</comment>
<comment type="similarity">
    <text evidence="1">Belongs to the ATPase alpha/beta chains family.</text>
</comment>